<organism>
    <name type="scientific">Prochlorococcus marinus (strain AS9601)</name>
    <dbReference type="NCBI Taxonomy" id="146891"/>
    <lineage>
        <taxon>Bacteria</taxon>
        <taxon>Bacillati</taxon>
        <taxon>Cyanobacteriota</taxon>
        <taxon>Cyanophyceae</taxon>
        <taxon>Synechococcales</taxon>
        <taxon>Prochlorococcaceae</taxon>
        <taxon>Prochlorococcus</taxon>
    </lineage>
</organism>
<accession>A2BT70</accession>
<keyword id="KW-0963">Cytoplasm</keyword>
<keyword id="KW-0342">GTP-binding</keyword>
<keyword id="KW-0396">Initiation factor</keyword>
<keyword id="KW-0547">Nucleotide-binding</keyword>
<keyword id="KW-0648">Protein biosynthesis</keyword>
<reference key="1">
    <citation type="journal article" date="2007" name="PLoS Genet.">
        <title>Patterns and implications of gene gain and loss in the evolution of Prochlorococcus.</title>
        <authorList>
            <person name="Kettler G.C."/>
            <person name="Martiny A.C."/>
            <person name="Huang K."/>
            <person name="Zucker J."/>
            <person name="Coleman M.L."/>
            <person name="Rodrigue S."/>
            <person name="Chen F."/>
            <person name="Lapidus A."/>
            <person name="Ferriera S."/>
            <person name="Johnson J."/>
            <person name="Steglich C."/>
            <person name="Church G.M."/>
            <person name="Richardson P."/>
            <person name="Chisholm S.W."/>
        </authorList>
    </citation>
    <scope>NUCLEOTIDE SEQUENCE [LARGE SCALE GENOMIC DNA]</scope>
    <source>
        <strain>AS9601</strain>
    </source>
</reference>
<gene>
    <name evidence="2" type="primary">infB</name>
    <name type="ordered locus">A9601_16981</name>
</gene>
<evidence type="ECO:0000250" key="1"/>
<evidence type="ECO:0000255" key="2">
    <source>
        <dbReference type="HAMAP-Rule" id="MF_00100"/>
    </source>
</evidence>
<evidence type="ECO:0000256" key="3">
    <source>
        <dbReference type="SAM" id="MobiDB-lite"/>
    </source>
</evidence>
<feature type="chain" id="PRO_0000335500" description="Translation initiation factor IF-2">
    <location>
        <begin position="1"/>
        <end position="1126"/>
    </location>
</feature>
<feature type="domain" description="tr-type G">
    <location>
        <begin position="618"/>
        <end position="790"/>
    </location>
</feature>
<feature type="region of interest" description="Disordered" evidence="3">
    <location>
        <begin position="63"/>
        <end position="519"/>
    </location>
</feature>
<feature type="region of interest" description="G1" evidence="1">
    <location>
        <begin position="627"/>
        <end position="634"/>
    </location>
</feature>
<feature type="region of interest" description="G2" evidence="1">
    <location>
        <begin position="652"/>
        <end position="656"/>
    </location>
</feature>
<feature type="region of interest" description="G3" evidence="1">
    <location>
        <begin position="677"/>
        <end position="680"/>
    </location>
</feature>
<feature type="region of interest" description="G4" evidence="1">
    <location>
        <begin position="731"/>
        <end position="734"/>
    </location>
</feature>
<feature type="region of interest" description="G5" evidence="1">
    <location>
        <begin position="767"/>
        <end position="769"/>
    </location>
</feature>
<feature type="compositionally biased region" description="Basic and acidic residues" evidence="3">
    <location>
        <begin position="70"/>
        <end position="83"/>
    </location>
</feature>
<feature type="compositionally biased region" description="Low complexity" evidence="3">
    <location>
        <begin position="93"/>
        <end position="111"/>
    </location>
</feature>
<feature type="compositionally biased region" description="Polar residues" evidence="3">
    <location>
        <begin position="116"/>
        <end position="151"/>
    </location>
</feature>
<feature type="compositionally biased region" description="Pro residues" evidence="3">
    <location>
        <begin position="161"/>
        <end position="171"/>
    </location>
</feature>
<feature type="compositionally biased region" description="Polar residues" evidence="3">
    <location>
        <begin position="181"/>
        <end position="195"/>
    </location>
</feature>
<feature type="compositionally biased region" description="Low complexity" evidence="3">
    <location>
        <begin position="211"/>
        <end position="224"/>
    </location>
</feature>
<feature type="compositionally biased region" description="Low complexity" evidence="3">
    <location>
        <begin position="240"/>
        <end position="252"/>
    </location>
</feature>
<feature type="compositionally biased region" description="Polar residues" evidence="3">
    <location>
        <begin position="254"/>
        <end position="264"/>
    </location>
</feature>
<feature type="compositionally biased region" description="Low complexity" evidence="3">
    <location>
        <begin position="291"/>
        <end position="315"/>
    </location>
</feature>
<feature type="compositionally biased region" description="Low complexity" evidence="3">
    <location>
        <begin position="327"/>
        <end position="349"/>
    </location>
</feature>
<feature type="compositionally biased region" description="Basic and acidic residues" evidence="3">
    <location>
        <begin position="429"/>
        <end position="443"/>
    </location>
</feature>
<feature type="compositionally biased region" description="Basic residues" evidence="3">
    <location>
        <begin position="501"/>
        <end position="517"/>
    </location>
</feature>
<feature type="binding site" evidence="2">
    <location>
        <begin position="627"/>
        <end position="634"/>
    </location>
    <ligand>
        <name>GTP</name>
        <dbReference type="ChEBI" id="CHEBI:37565"/>
    </ligand>
</feature>
<feature type="binding site" evidence="2">
    <location>
        <begin position="677"/>
        <end position="681"/>
    </location>
    <ligand>
        <name>GTP</name>
        <dbReference type="ChEBI" id="CHEBI:37565"/>
    </ligand>
</feature>
<feature type="binding site" evidence="2">
    <location>
        <begin position="731"/>
        <end position="734"/>
    </location>
    <ligand>
        <name>GTP</name>
        <dbReference type="ChEBI" id="CHEBI:37565"/>
    </ligand>
</feature>
<protein>
    <recommendedName>
        <fullName evidence="2">Translation initiation factor IF-2</fullName>
    </recommendedName>
</protein>
<proteinExistence type="inferred from homology"/>
<dbReference type="EMBL" id="CP000551">
    <property type="protein sequence ID" value="ABM70981.1"/>
    <property type="molecule type" value="Genomic_DNA"/>
</dbReference>
<dbReference type="RefSeq" id="WP_011819109.1">
    <property type="nucleotide sequence ID" value="NC_008816.1"/>
</dbReference>
<dbReference type="SMR" id="A2BT70"/>
<dbReference type="STRING" id="146891.A9601_16981"/>
<dbReference type="KEGG" id="pmb:A9601_16981"/>
<dbReference type="eggNOG" id="COG0532">
    <property type="taxonomic scope" value="Bacteria"/>
</dbReference>
<dbReference type="HOGENOM" id="CLU_006301_5_1_3"/>
<dbReference type="OrthoDB" id="9811804at2"/>
<dbReference type="Proteomes" id="UP000002590">
    <property type="component" value="Chromosome"/>
</dbReference>
<dbReference type="GO" id="GO:0005829">
    <property type="term" value="C:cytosol"/>
    <property type="evidence" value="ECO:0007669"/>
    <property type="project" value="TreeGrafter"/>
</dbReference>
<dbReference type="GO" id="GO:0005525">
    <property type="term" value="F:GTP binding"/>
    <property type="evidence" value="ECO:0007669"/>
    <property type="project" value="UniProtKB-KW"/>
</dbReference>
<dbReference type="GO" id="GO:0003924">
    <property type="term" value="F:GTPase activity"/>
    <property type="evidence" value="ECO:0007669"/>
    <property type="project" value="UniProtKB-UniRule"/>
</dbReference>
<dbReference type="GO" id="GO:0003743">
    <property type="term" value="F:translation initiation factor activity"/>
    <property type="evidence" value="ECO:0007669"/>
    <property type="project" value="UniProtKB-UniRule"/>
</dbReference>
<dbReference type="CDD" id="cd01887">
    <property type="entry name" value="IF2_eIF5B"/>
    <property type="match status" value="1"/>
</dbReference>
<dbReference type="CDD" id="cd03702">
    <property type="entry name" value="IF2_mtIF2_II"/>
    <property type="match status" value="1"/>
</dbReference>
<dbReference type="CDD" id="cd03692">
    <property type="entry name" value="mtIF2_IVc"/>
    <property type="match status" value="1"/>
</dbReference>
<dbReference type="FunFam" id="2.40.30.10:FF:000007">
    <property type="entry name" value="Translation initiation factor IF-2"/>
    <property type="match status" value="1"/>
</dbReference>
<dbReference type="FunFam" id="2.40.30.10:FF:000008">
    <property type="entry name" value="Translation initiation factor IF-2"/>
    <property type="match status" value="1"/>
</dbReference>
<dbReference type="FunFam" id="3.40.50.10050:FF:000001">
    <property type="entry name" value="Translation initiation factor IF-2"/>
    <property type="match status" value="1"/>
</dbReference>
<dbReference type="FunFam" id="3.40.50.300:FF:000019">
    <property type="entry name" value="Translation initiation factor IF-2"/>
    <property type="match status" value="1"/>
</dbReference>
<dbReference type="Gene3D" id="1.10.10.2480">
    <property type="match status" value="1"/>
</dbReference>
<dbReference type="Gene3D" id="3.40.50.300">
    <property type="entry name" value="P-loop containing nucleotide triphosphate hydrolases"/>
    <property type="match status" value="1"/>
</dbReference>
<dbReference type="Gene3D" id="2.40.30.10">
    <property type="entry name" value="Translation factors"/>
    <property type="match status" value="2"/>
</dbReference>
<dbReference type="Gene3D" id="3.40.50.10050">
    <property type="entry name" value="Translation initiation factor IF- 2, domain 3"/>
    <property type="match status" value="1"/>
</dbReference>
<dbReference type="HAMAP" id="MF_00100_B">
    <property type="entry name" value="IF_2_B"/>
    <property type="match status" value="1"/>
</dbReference>
<dbReference type="InterPro" id="IPR053905">
    <property type="entry name" value="EF-G-like_DII"/>
</dbReference>
<dbReference type="InterPro" id="IPR044145">
    <property type="entry name" value="IF2_II"/>
</dbReference>
<dbReference type="InterPro" id="IPR006847">
    <property type="entry name" value="IF2_N"/>
</dbReference>
<dbReference type="InterPro" id="IPR027417">
    <property type="entry name" value="P-loop_NTPase"/>
</dbReference>
<dbReference type="InterPro" id="IPR005225">
    <property type="entry name" value="Small_GTP-bd"/>
</dbReference>
<dbReference type="InterPro" id="IPR000795">
    <property type="entry name" value="T_Tr_GTP-bd_dom"/>
</dbReference>
<dbReference type="InterPro" id="IPR000178">
    <property type="entry name" value="TF_IF2_bacterial-like"/>
</dbReference>
<dbReference type="InterPro" id="IPR015760">
    <property type="entry name" value="TIF_IF2"/>
</dbReference>
<dbReference type="InterPro" id="IPR023115">
    <property type="entry name" value="TIF_IF2_dom3"/>
</dbReference>
<dbReference type="InterPro" id="IPR036925">
    <property type="entry name" value="TIF_IF2_dom3_sf"/>
</dbReference>
<dbReference type="InterPro" id="IPR009000">
    <property type="entry name" value="Transl_B-barrel_sf"/>
</dbReference>
<dbReference type="NCBIfam" id="TIGR00487">
    <property type="entry name" value="IF-2"/>
    <property type="match status" value="1"/>
</dbReference>
<dbReference type="NCBIfam" id="TIGR00231">
    <property type="entry name" value="small_GTP"/>
    <property type="match status" value="1"/>
</dbReference>
<dbReference type="PANTHER" id="PTHR43381:SF5">
    <property type="entry name" value="TR-TYPE G DOMAIN-CONTAINING PROTEIN"/>
    <property type="match status" value="1"/>
</dbReference>
<dbReference type="PANTHER" id="PTHR43381">
    <property type="entry name" value="TRANSLATION INITIATION FACTOR IF-2-RELATED"/>
    <property type="match status" value="1"/>
</dbReference>
<dbReference type="Pfam" id="PF22042">
    <property type="entry name" value="EF-G_D2"/>
    <property type="match status" value="1"/>
</dbReference>
<dbReference type="Pfam" id="PF00009">
    <property type="entry name" value="GTP_EFTU"/>
    <property type="match status" value="1"/>
</dbReference>
<dbReference type="Pfam" id="PF11987">
    <property type="entry name" value="IF-2"/>
    <property type="match status" value="1"/>
</dbReference>
<dbReference type="Pfam" id="PF04760">
    <property type="entry name" value="IF2_N"/>
    <property type="match status" value="2"/>
</dbReference>
<dbReference type="PRINTS" id="PR00315">
    <property type="entry name" value="ELONGATNFCT"/>
</dbReference>
<dbReference type="SUPFAM" id="SSF52156">
    <property type="entry name" value="Initiation factor IF2/eIF5b, domain 3"/>
    <property type="match status" value="1"/>
</dbReference>
<dbReference type="SUPFAM" id="SSF52540">
    <property type="entry name" value="P-loop containing nucleoside triphosphate hydrolases"/>
    <property type="match status" value="1"/>
</dbReference>
<dbReference type="SUPFAM" id="SSF50447">
    <property type="entry name" value="Translation proteins"/>
    <property type="match status" value="2"/>
</dbReference>
<dbReference type="PROSITE" id="PS51722">
    <property type="entry name" value="G_TR_2"/>
    <property type="match status" value="1"/>
</dbReference>
<dbReference type="PROSITE" id="PS01176">
    <property type="entry name" value="IF2"/>
    <property type="match status" value="1"/>
</dbReference>
<sequence>MTISDKIRIYELSRDLNLENKDILDAAQKLSISVKSHSSSISSEEAKKIKNLINKKNPDKTILSINKPSIKKDNFKQNKEDKSPVLSSKQGKPLKNNSNKKPLLIKPLNKPESVKKISNQLQNPNKPNIVNSSQSRANLTNTNSKPSQNFNQDKKTFVNNTPPPIKSPAKPPIQLIAKPKNINNNVKSSESSQNIARAEDKRRLSSKPDQNTNKPKTKNFNNRKNTPELVGAPIRREDPIINPNKQNNNKQNIAFKQTASNRPGSPNRPGMPNRPGLRNKPSDQGRPGSFNRQGNPNRPGSPNRPGMPNRPGLRNKPSDQGRPGSFNRQGNPNRPGSPNGPGMPNNRPGSKFNGQNSSGIRKPVSPNELLQLQKNNNSEKDKIGIKNNSKQNIEVPKQKAKAPNNRPNATPSSKKPPHRTFSNSSKKPGKTDWDDSAKLEALRSKNTQKQRQKVHIIGENDDSLTSETSGYSGEKISILSASLARPKKGKSDESKSQKTIKQFKKKKKETTRQRQKRRAMELKAAKEAKQVRPEMIIVPEDNLTVQELADKLSLESSEIIKSLFFKGITATVTQSLDLATIETVAEEFGVPVLQDDIQEAAEKTVDMIESEDIDNLIRRPPVITVMGHVDHGKTSLLDSIRESRIASGEAGGITQHIGAYQVEFEHESQKKKLTFLDTPGHEAFTAMRARGTKVTDVAVLVVAADDGCRPQTLEAISHARAAKVPIVVAINKIDKEGASPERVKQELSEKDLIAEDWGGDTVMVPVSAIKKQNIDKLLEMILLVSDVEDLQANPDRFAKGTVIEAHLDKAKGPVATLLVQNGTLKSGDVLAAGSVLGKIRAMVDEHGNRIKEAGPSFPVEALGFSEVPTAGDEFEVYPDEKTARAIVGERATDARATKLAQQMASRRVSLSSLSTQANDGELKELNLILKADVQGSVEAILGSLEQLPKNEVQVRVLLSAPGEITETDIDLAAASGSVIVGFNTSLASGAKRAADANDVDIREYEVIYKLLEDIQLAMEGLLEPDLVEESLGQAEVRATFSVGKGAIAGCYIQTGKLQRNCSLRVIRSEKVIFEGNLDSLKRVKDDVKEVNTGFECGVGCDKFSSWVEGDVIEAFKFVTKKRTLSQ</sequence>
<comment type="function">
    <text evidence="2">One of the essential components for the initiation of protein synthesis. Protects formylmethionyl-tRNA from spontaneous hydrolysis and promotes its binding to the 30S ribosomal subunits. Also involved in the hydrolysis of GTP during the formation of the 70S ribosomal complex.</text>
</comment>
<comment type="subcellular location">
    <subcellularLocation>
        <location evidence="2">Cytoplasm</location>
    </subcellularLocation>
</comment>
<comment type="similarity">
    <text evidence="2">Belongs to the TRAFAC class translation factor GTPase superfamily. Classic translation factor GTPase family. IF-2 subfamily.</text>
</comment>
<name>IF2_PROMS</name>